<sequence length="341" mass="39695">MALVPKIRNRTISDKPVSSSCTRTSSFRQRLLASCKRFLRFKLLVRASSVSLKKKAARCSQSQQVVKHNDDRIEEHSSSNRGFKDGNNFLVSSTETKKLVAFCGEPFQPLNEEEVALVNSALSKRNRKKILVSHKNSNIDISGETLQCLRPNQWLNDDVTNLYLELLKERQTRDPQKYFKCHFFNTFFYVKLVSGSGYNYKAVSRWTTKRKLGYDLIDCDIIFVPIHIDIHWTLGVINNRERKFVYLDSLFTGVGHTILNAMAKYLVDEVKQKSQKNIDVSSWGMEYVEERPQQQNGYDCGMFMLKYIDFYSRGLSLQFSQKDMPYFRLRTAKEILRLRAD</sequence>
<name>ULP1B_ARATH</name>
<reference key="1">
    <citation type="journal article" date="1999" name="Nature">
        <title>Sequence and analysis of chromosome 4 of the plant Arabidopsis thaliana.</title>
        <authorList>
            <person name="Mayer K.F.X."/>
            <person name="Schueller C."/>
            <person name="Wambutt R."/>
            <person name="Murphy G."/>
            <person name="Volckaert G."/>
            <person name="Pohl T."/>
            <person name="Duesterhoeft A."/>
            <person name="Stiekema W."/>
            <person name="Entian K.-D."/>
            <person name="Terryn N."/>
            <person name="Harris B."/>
            <person name="Ansorge W."/>
            <person name="Brandt P."/>
            <person name="Grivell L.A."/>
            <person name="Rieger M."/>
            <person name="Weichselgartner M."/>
            <person name="de Simone V."/>
            <person name="Obermaier B."/>
            <person name="Mache R."/>
            <person name="Mueller M."/>
            <person name="Kreis M."/>
            <person name="Delseny M."/>
            <person name="Puigdomenech P."/>
            <person name="Watson M."/>
            <person name="Schmidtheini T."/>
            <person name="Reichert B."/>
            <person name="Portetelle D."/>
            <person name="Perez-Alonso M."/>
            <person name="Boutry M."/>
            <person name="Bancroft I."/>
            <person name="Vos P."/>
            <person name="Hoheisel J."/>
            <person name="Zimmermann W."/>
            <person name="Wedler H."/>
            <person name="Ridley P."/>
            <person name="Langham S.-A."/>
            <person name="McCullagh B."/>
            <person name="Bilham L."/>
            <person name="Robben J."/>
            <person name="van der Schueren J."/>
            <person name="Grymonprez B."/>
            <person name="Chuang Y.-J."/>
            <person name="Vandenbussche F."/>
            <person name="Braeken M."/>
            <person name="Weltjens I."/>
            <person name="Voet M."/>
            <person name="Bastiaens I."/>
            <person name="Aert R."/>
            <person name="Defoor E."/>
            <person name="Weitzenegger T."/>
            <person name="Bothe G."/>
            <person name="Ramsperger U."/>
            <person name="Hilbert H."/>
            <person name="Braun M."/>
            <person name="Holzer E."/>
            <person name="Brandt A."/>
            <person name="Peters S."/>
            <person name="van Staveren M."/>
            <person name="Dirkse W."/>
            <person name="Mooijman P."/>
            <person name="Klein Lankhorst R."/>
            <person name="Rose M."/>
            <person name="Hauf J."/>
            <person name="Koetter P."/>
            <person name="Berneiser S."/>
            <person name="Hempel S."/>
            <person name="Feldpausch M."/>
            <person name="Lamberth S."/>
            <person name="Van den Daele H."/>
            <person name="De Keyser A."/>
            <person name="Buysshaert C."/>
            <person name="Gielen J."/>
            <person name="Villarroel R."/>
            <person name="De Clercq R."/>
            <person name="van Montagu M."/>
            <person name="Rogers J."/>
            <person name="Cronin A."/>
            <person name="Quail M.A."/>
            <person name="Bray-Allen S."/>
            <person name="Clark L."/>
            <person name="Doggett J."/>
            <person name="Hall S."/>
            <person name="Kay M."/>
            <person name="Lennard N."/>
            <person name="McLay K."/>
            <person name="Mayes R."/>
            <person name="Pettett A."/>
            <person name="Rajandream M.A."/>
            <person name="Lyne M."/>
            <person name="Benes V."/>
            <person name="Rechmann S."/>
            <person name="Borkova D."/>
            <person name="Bloecker H."/>
            <person name="Scharfe M."/>
            <person name="Grimm M."/>
            <person name="Loehnert T.-H."/>
            <person name="Dose S."/>
            <person name="de Haan M."/>
            <person name="Maarse A.C."/>
            <person name="Schaefer M."/>
            <person name="Mueller-Auer S."/>
            <person name="Gabel C."/>
            <person name="Fuchs M."/>
            <person name="Fartmann B."/>
            <person name="Granderath K."/>
            <person name="Dauner D."/>
            <person name="Herzl A."/>
            <person name="Neumann S."/>
            <person name="Argiriou A."/>
            <person name="Vitale D."/>
            <person name="Liguori R."/>
            <person name="Piravandi E."/>
            <person name="Massenet O."/>
            <person name="Quigley F."/>
            <person name="Clabauld G."/>
            <person name="Muendlein A."/>
            <person name="Felber R."/>
            <person name="Schnabl S."/>
            <person name="Hiller R."/>
            <person name="Schmidt W."/>
            <person name="Lecharny A."/>
            <person name="Aubourg S."/>
            <person name="Chefdor F."/>
            <person name="Cooke R."/>
            <person name="Berger C."/>
            <person name="Monfort A."/>
            <person name="Casacuberta E."/>
            <person name="Gibbons T."/>
            <person name="Weber N."/>
            <person name="Vandenbol M."/>
            <person name="Bargues M."/>
            <person name="Terol J."/>
            <person name="Torres A."/>
            <person name="Perez-Perez A."/>
            <person name="Purnelle B."/>
            <person name="Bent E."/>
            <person name="Johnson S."/>
            <person name="Tacon D."/>
            <person name="Jesse T."/>
            <person name="Heijnen L."/>
            <person name="Schwarz S."/>
            <person name="Scholler P."/>
            <person name="Heber S."/>
            <person name="Francs P."/>
            <person name="Bielke C."/>
            <person name="Frishman D."/>
            <person name="Haase D."/>
            <person name="Lemcke K."/>
            <person name="Mewes H.-W."/>
            <person name="Stocker S."/>
            <person name="Zaccaria P."/>
            <person name="Bevan M."/>
            <person name="Wilson R.K."/>
            <person name="de la Bastide M."/>
            <person name="Habermann K."/>
            <person name="Parnell L."/>
            <person name="Dedhia N."/>
            <person name="Gnoj L."/>
            <person name="Schutz K."/>
            <person name="Huang E."/>
            <person name="Spiegel L."/>
            <person name="Sekhon M."/>
            <person name="Murray J."/>
            <person name="Sheet P."/>
            <person name="Cordes M."/>
            <person name="Abu-Threideh J."/>
            <person name="Stoneking T."/>
            <person name="Kalicki J."/>
            <person name="Graves T."/>
            <person name="Harmon G."/>
            <person name="Edwards J."/>
            <person name="Latreille P."/>
            <person name="Courtney L."/>
            <person name="Cloud J."/>
            <person name="Abbott A."/>
            <person name="Scott K."/>
            <person name="Johnson D."/>
            <person name="Minx P."/>
            <person name="Bentley D."/>
            <person name="Fulton B."/>
            <person name="Miller N."/>
            <person name="Greco T."/>
            <person name="Kemp K."/>
            <person name="Kramer J."/>
            <person name="Fulton L."/>
            <person name="Mardis E."/>
            <person name="Dante M."/>
            <person name="Pepin K."/>
            <person name="Hillier L.W."/>
            <person name="Nelson J."/>
            <person name="Spieth J."/>
            <person name="Ryan E."/>
            <person name="Andrews S."/>
            <person name="Geisel C."/>
            <person name="Layman D."/>
            <person name="Du H."/>
            <person name="Ali J."/>
            <person name="Berghoff A."/>
            <person name="Jones K."/>
            <person name="Drone K."/>
            <person name="Cotton M."/>
            <person name="Joshu C."/>
            <person name="Antonoiu B."/>
            <person name="Zidanic M."/>
            <person name="Strong C."/>
            <person name="Sun H."/>
            <person name="Lamar B."/>
            <person name="Yordan C."/>
            <person name="Ma P."/>
            <person name="Zhong J."/>
            <person name="Preston R."/>
            <person name="Vil D."/>
            <person name="Shekher M."/>
            <person name="Matero A."/>
            <person name="Shah R."/>
            <person name="Swaby I.K."/>
            <person name="O'Shaughnessy A."/>
            <person name="Rodriguez M."/>
            <person name="Hoffman J."/>
            <person name="Till S."/>
            <person name="Granat S."/>
            <person name="Shohdy N."/>
            <person name="Hasegawa A."/>
            <person name="Hameed A."/>
            <person name="Lodhi M."/>
            <person name="Johnson A."/>
            <person name="Chen E."/>
            <person name="Marra M.A."/>
            <person name="Martienssen R."/>
            <person name="McCombie W.R."/>
        </authorList>
    </citation>
    <scope>NUCLEOTIDE SEQUENCE [LARGE SCALE GENOMIC DNA]</scope>
    <source>
        <strain>cv. Columbia</strain>
    </source>
</reference>
<reference key="2">
    <citation type="journal article" date="2017" name="Plant J.">
        <title>Araport11: a complete reannotation of the Arabidopsis thaliana reference genome.</title>
        <authorList>
            <person name="Cheng C.Y."/>
            <person name="Krishnakumar V."/>
            <person name="Chan A.P."/>
            <person name="Thibaud-Nissen F."/>
            <person name="Schobel S."/>
            <person name="Town C.D."/>
        </authorList>
    </citation>
    <scope>GENOME REANNOTATION</scope>
    <source>
        <strain>cv. Columbia</strain>
    </source>
</reference>
<reference key="3">
    <citation type="journal article" date="2003" name="J. Biol. Chem.">
        <title>The small ubiquitin-like modifier (SUMO) protein modification system in Arabidopsis. Accumulation of SUMO1 and -2 conjugates is increased by stress.</title>
        <authorList>
            <person name="Kurepa J."/>
            <person name="Walker J.M."/>
            <person name="Smalle J."/>
            <person name="Gosink M.M."/>
            <person name="Davis S.J."/>
            <person name="Durham T.L."/>
            <person name="Sung D.Y."/>
            <person name="Vierstra R.D."/>
        </authorList>
    </citation>
    <scope>IDENTIFICATION</scope>
    <scope>GENE FAMILY</scope>
    <scope>NOMENCLATURE</scope>
</reference>
<reference key="4">
    <citation type="journal article" date="2006" name="Biochem. J.">
        <title>Evolution of a signalling system that incorporates both redundancy and diversity: Arabidopsis SUMOylation.</title>
        <authorList>
            <person name="Chosed R."/>
            <person name="Mukherjee S."/>
            <person name="Lois L.M."/>
            <person name="Orth K."/>
        </authorList>
    </citation>
    <scope>IDENTIFICATION</scope>
</reference>
<reference key="5">
    <citation type="journal article" date="2006" name="Plant Physiol.">
        <title>SUMO-conjugating and SUMO-deconjugating enzymes from Arabidopsis.</title>
        <authorList>
            <person name="Colby T."/>
            <person name="Matthai A."/>
            <person name="Boeckelmann A."/>
            <person name="Stuible H.P."/>
        </authorList>
    </citation>
    <scope>GENE FAMILY</scope>
    <scope>NOMENCLATURE</scope>
</reference>
<feature type="chain" id="PRO_0000395969" description="Putative ubiquitin-like-specific protease 1B">
    <location>
        <begin position="1"/>
        <end position="341"/>
    </location>
</feature>
<feature type="active site" evidence="1">
    <location>
        <position position="231"/>
    </location>
</feature>
<feature type="active site" evidence="1">
    <location>
        <position position="248"/>
    </location>
</feature>
<feature type="active site" evidence="1">
    <location>
        <position position="300"/>
    </location>
</feature>
<protein>
    <recommendedName>
        <fullName>Putative ubiquitin-like-specific protease 1B</fullName>
        <ecNumber>3.4.22.-</ecNumber>
    </recommendedName>
</protein>
<comment type="function">
    <text evidence="1">Protease that catalyzes two essential functions in the SUMO pathway: processing of full-length SUMOs to their mature forms and deconjugation of SUMO from targeted proteins.</text>
</comment>
<comment type="similarity">
    <text evidence="2">Belongs to the peptidase C48 family.</text>
</comment>
<comment type="caution">
    <text evidence="2">Could be the product of a pseudogene.</text>
</comment>
<comment type="sequence caution" evidence="2">
    <conflict type="erroneous gene model prediction">
        <sequence resource="EMBL-CDS" id="AAC13629"/>
    </conflict>
</comment>
<comment type="sequence caution" evidence="2">
    <conflict type="erroneous gene model prediction">
        <sequence resource="EMBL-CDS" id="CAB80878"/>
    </conflict>
</comment>
<dbReference type="EC" id="3.4.22.-"/>
<dbReference type="EMBL" id="AF058919">
    <property type="protein sequence ID" value="AAC13629.1"/>
    <property type="status" value="ALT_SEQ"/>
    <property type="molecule type" value="Genomic_DNA"/>
</dbReference>
<dbReference type="EMBL" id="AL161472">
    <property type="protein sequence ID" value="CAB80878.1"/>
    <property type="status" value="ALT_SEQ"/>
    <property type="molecule type" value="Genomic_DNA"/>
</dbReference>
<dbReference type="EMBL" id="CP002687">
    <property type="protein sequence ID" value="AEE81919.2"/>
    <property type="molecule type" value="Genomic_DNA"/>
</dbReference>
<dbReference type="PIR" id="T01233">
    <property type="entry name" value="T01233"/>
</dbReference>
<dbReference type="RefSeq" id="NP_001319834.1">
    <property type="nucleotide sequence ID" value="NM_001340261.1"/>
</dbReference>
<dbReference type="SMR" id="O65278"/>
<dbReference type="FunCoup" id="O65278">
    <property type="interactions" value="26"/>
</dbReference>
<dbReference type="STRING" id="3702.O65278"/>
<dbReference type="MEROPS" id="C48.A01"/>
<dbReference type="PaxDb" id="3702-AT4G00690.1"/>
<dbReference type="ProteomicsDB" id="245307"/>
<dbReference type="EnsemblPlants" id="AT4G00690.1">
    <property type="protein sequence ID" value="AT4G00690.1"/>
    <property type="gene ID" value="AT4G00690"/>
</dbReference>
<dbReference type="GeneID" id="828036"/>
<dbReference type="Gramene" id="AT4G00690.1">
    <property type="protein sequence ID" value="AT4G00690.1"/>
    <property type="gene ID" value="AT4G00690"/>
</dbReference>
<dbReference type="KEGG" id="ath:AT4G00690"/>
<dbReference type="Araport" id="AT4G00690"/>
<dbReference type="TAIR" id="AT4G00690">
    <property type="gene designation" value="ULP1B"/>
</dbReference>
<dbReference type="eggNOG" id="KOG0778">
    <property type="taxonomic scope" value="Eukaryota"/>
</dbReference>
<dbReference type="HOGENOM" id="CLU_024324_4_1_1"/>
<dbReference type="InParanoid" id="O65278"/>
<dbReference type="OMA" id="IDISSWD"/>
<dbReference type="Proteomes" id="UP000006548">
    <property type="component" value="Chromosome 4"/>
</dbReference>
<dbReference type="ExpressionAtlas" id="O65278">
    <property type="expression patterns" value="baseline and differential"/>
</dbReference>
<dbReference type="GO" id="GO:0008234">
    <property type="term" value="F:cysteine-type peptidase activity"/>
    <property type="evidence" value="ECO:0007669"/>
    <property type="project" value="UniProtKB-KW"/>
</dbReference>
<dbReference type="GO" id="GO:0006508">
    <property type="term" value="P:proteolysis"/>
    <property type="evidence" value="ECO:0007669"/>
    <property type="project" value="UniProtKB-KW"/>
</dbReference>
<dbReference type="Gene3D" id="3.40.395.10">
    <property type="entry name" value="Adenoviral Proteinase, Chain A"/>
    <property type="match status" value="1"/>
</dbReference>
<dbReference type="InterPro" id="IPR038765">
    <property type="entry name" value="Papain-like_cys_pep_sf"/>
</dbReference>
<dbReference type="InterPro" id="IPR003653">
    <property type="entry name" value="Peptidase_C48_C"/>
</dbReference>
<dbReference type="PANTHER" id="PTHR12606">
    <property type="entry name" value="SENTRIN/SUMO-SPECIFIC PROTEASE"/>
    <property type="match status" value="1"/>
</dbReference>
<dbReference type="PANTHER" id="PTHR12606:SF156">
    <property type="entry name" value="UBIQUITIN-LIKE-SPECIFIC PROTEASE ESD4-RELATED"/>
    <property type="match status" value="1"/>
</dbReference>
<dbReference type="Pfam" id="PF02902">
    <property type="entry name" value="Peptidase_C48"/>
    <property type="match status" value="1"/>
</dbReference>
<dbReference type="SUPFAM" id="SSF54001">
    <property type="entry name" value="Cysteine proteinases"/>
    <property type="match status" value="1"/>
</dbReference>
<dbReference type="PROSITE" id="PS50600">
    <property type="entry name" value="ULP_PROTEASE"/>
    <property type="match status" value="1"/>
</dbReference>
<evidence type="ECO:0000250" key="1"/>
<evidence type="ECO:0000305" key="2"/>
<gene>
    <name type="primary">ULP1B</name>
    <name type="ordered locus">At4g00690</name>
    <name type="ORF">F6N23.7</name>
</gene>
<accession>O65278</accession>
<accession>F4JHF6</accession>
<organism>
    <name type="scientific">Arabidopsis thaliana</name>
    <name type="common">Mouse-ear cress</name>
    <dbReference type="NCBI Taxonomy" id="3702"/>
    <lineage>
        <taxon>Eukaryota</taxon>
        <taxon>Viridiplantae</taxon>
        <taxon>Streptophyta</taxon>
        <taxon>Embryophyta</taxon>
        <taxon>Tracheophyta</taxon>
        <taxon>Spermatophyta</taxon>
        <taxon>Magnoliopsida</taxon>
        <taxon>eudicotyledons</taxon>
        <taxon>Gunneridae</taxon>
        <taxon>Pentapetalae</taxon>
        <taxon>rosids</taxon>
        <taxon>malvids</taxon>
        <taxon>Brassicales</taxon>
        <taxon>Brassicaceae</taxon>
        <taxon>Camelineae</taxon>
        <taxon>Arabidopsis</taxon>
    </lineage>
</organism>
<proteinExistence type="uncertain"/>
<keyword id="KW-0378">Hydrolase</keyword>
<keyword id="KW-0645">Protease</keyword>
<keyword id="KW-1185">Reference proteome</keyword>
<keyword id="KW-0788">Thiol protease</keyword>
<keyword id="KW-0833">Ubl conjugation pathway</keyword>